<dbReference type="EMBL" id="AL391244">
    <property type="status" value="NOT_ANNOTATED_CDS"/>
    <property type="molecule type" value="Genomic_DNA"/>
</dbReference>
<dbReference type="EMBL" id="BC063445">
    <property type="status" value="NOT_ANNOTATED_CDS"/>
    <property type="molecule type" value="mRNA"/>
</dbReference>
<dbReference type="EMBL" id="BC094869">
    <property type="status" value="NOT_ANNOTATED_CDS"/>
    <property type="molecule type" value="mRNA"/>
</dbReference>
<dbReference type="EMBL" id="AI522076">
    <property type="status" value="NOT_ANNOTATED_CDS"/>
    <property type="molecule type" value="mRNA"/>
</dbReference>
<dbReference type="CCDS" id="CCDS55558.1">
    <molecule id="E5RJM6-1"/>
</dbReference>
<dbReference type="CCDS" id="CCDS57962.1">
    <molecule id="E5RJM6-2"/>
</dbReference>
<dbReference type="CCDS" id="CCDS57963.1">
    <molecule id="E5RJM6-3"/>
</dbReference>
<dbReference type="RefSeq" id="NP_001138682.1">
    <molecule id="E5RJM6-1"/>
    <property type="nucleotide sequence ID" value="NM_001145210.3"/>
</dbReference>
<dbReference type="RefSeq" id="NP_001230464.1">
    <molecule id="E5RJM6-2"/>
    <property type="nucleotide sequence ID" value="NM_001243535.2"/>
</dbReference>
<dbReference type="RefSeq" id="NP_001230465.1">
    <molecule id="E5RJM6-3"/>
    <property type="nucleotide sequence ID" value="NM_001243536.2"/>
</dbReference>
<dbReference type="RefSeq" id="NP_001362588.1">
    <molecule id="E5RJM6-2"/>
    <property type="nucleotide sequence ID" value="NM_001375659.1"/>
</dbReference>
<dbReference type="RefSeq" id="NP_001362589.1">
    <molecule id="E5RJM6-3"/>
    <property type="nucleotide sequence ID" value="NM_001375660.1"/>
</dbReference>
<dbReference type="RefSeq" id="XP_005244809.1">
    <molecule id="E5RJM6-1"/>
    <property type="nucleotide sequence ID" value="XM_005244752.5"/>
</dbReference>
<dbReference type="RefSeq" id="XP_006710710.1">
    <molecule id="E5RJM6-1"/>
    <property type="nucleotide sequence ID" value="XM_006710647.4"/>
</dbReference>
<dbReference type="RefSeq" id="XP_011539791.1">
    <property type="nucleotide sequence ID" value="XM_011541489.2"/>
</dbReference>
<dbReference type="RefSeq" id="XP_016856813.1">
    <property type="nucleotide sequence ID" value="XM_017001324.1"/>
</dbReference>
<dbReference type="RefSeq" id="XP_016856814.1">
    <property type="nucleotide sequence ID" value="XM_017001325.1"/>
</dbReference>
<dbReference type="RefSeq" id="XP_016856815.1">
    <property type="nucleotide sequence ID" value="XM_017001326.1"/>
</dbReference>
<dbReference type="RefSeq" id="XP_054192667.1">
    <molecule id="E5RJM6-1"/>
    <property type="nucleotide sequence ID" value="XM_054336692.1"/>
</dbReference>
<dbReference type="RefSeq" id="XP_054192668.1">
    <molecule id="E5RJM6-1"/>
    <property type="nucleotide sequence ID" value="XM_054336693.1"/>
</dbReference>
<dbReference type="RefSeq" id="XP_054192669.1">
    <molecule id="E5RJM6-1"/>
    <property type="nucleotide sequence ID" value="XM_054336694.1"/>
</dbReference>
<dbReference type="SMR" id="E5RJM6"/>
<dbReference type="BioGRID" id="137829">
    <property type="interactions" value="10"/>
</dbReference>
<dbReference type="IntAct" id="E5RJM6">
    <property type="interactions" value="1"/>
</dbReference>
<dbReference type="STRING" id="9606.ENSP00000445688"/>
<dbReference type="GlyGen" id="E5RJM6">
    <property type="glycosylation" value="1 site"/>
</dbReference>
<dbReference type="PhosphoSitePlus" id="E5RJM6"/>
<dbReference type="BioMuta" id="ANKRD65"/>
<dbReference type="jPOST" id="E5RJM6"/>
<dbReference type="MassIVE" id="E5RJM6"/>
<dbReference type="PaxDb" id="9606-ENSP00000445688"/>
<dbReference type="PeptideAtlas" id="E5RJM6"/>
<dbReference type="ProteomicsDB" id="16650">
    <molecule id="E5RJM6-1"/>
</dbReference>
<dbReference type="ProteomicsDB" id="16651">
    <molecule id="E5RJM6-2"/>
</dbReference>
<dbReference type="Antibodypedia" id="58071">
    <property type="antibodies" value="33 antibodies from 10 providers"/>
</dbReference>
<dbReference type="DNASU" id="441869"/>
<dbReference type="Ensembl" id="ENST00000427211.3">
    <molecule id="E5RJM6-2"/>
    <property type="protein sequence ID" value="ENSP00000428419.1"/>
    <property type="gene ID" value="ENSG00000235098.9"/>
</dbReference>
<dbReference type="Ensembl" id="ENST00000442470.1">
    <molecule id="E5RJM6-2"/>
    <property type="protein sequence ID" value="ENSP00000428201.1"/>
    <property type="gene ID" value="ENSG00000235098.9"/>
</dbReference>
<dbReference type="Ensembl" id="ENST00000454272.2">
    <molecule id="E5RJM6-1"/>
    <property type="protein sequence ID" value="ENSP00000482314.1"/>
    <property type="gene ID" value="ENSG00000235098.9"/>
</dbReference>
<dbReference type="Ensembl" id="ENST00000520296.5">
    <molecule id="E5RJM6-3"/>
    <property type="protein sequence ID" value="ENSP00000429035.1"/>
    <property type="gene ID" value="ENSG00000235098.9"/>
</dbReference>
<dbReference type="Ensembl" id="ENST00000537107.6">
    <molecule id="E5RJM6-1"/>
    <property type="protein sequence ID" value="ENSP00000445688.1"/>
    <property type="gene ID" value="ENSG00000235098.9"/>
</dbReference>
<dbReference type="GeneID" id="441869"/>
<dbReference type="KEGG" id="hsa:441869"/>
<dbReference type="MANE-Select" id="ENST00000537107.6">
    <property type="protein sequence ID" value="ENSP00000445688.1"/>
    <property type="RefSeq nucleotide sequence ID" value="NM_001145210.3"/>
    <property type="RefSeq protein sequence ID" value="NP_001138682.1"/>
</dbReference>
<dbReference type="UCSC" id="uc001afp.3">
    <molecule id="E5RJM6-1"/>
    <property type="organism name" value="human"/>
</dbReference>
<dbReference type="AGR" id="HGNC:42950"/>
<dbReference type="CTD" id="441869"/>
<dbReference type="GeneCards" id="ANKRD65"/>
<dbReference type="HGNC" id="HGNC:42950">
    <property type="gene designation" value="ANKRD65"/>
</dbReference>
<dbReference type="HPA" id="ENSG00000235098">
    <property type="expression patterns" value="Low tissue specificity"/>
</dbReference>
<dbReference type="neXtProt" id="NX_E5RJM6"/>
<dbReference type="OpenTargets" id="ENSG00000235098"/>
<dbReference type="VEuPathDB" id="HostDB:ENSG00000235098"/>
<dbReference type="eggNOG" id="KOG4177">
    <property type="taxonomic scope" value="Eukaryota"/>
</dbReference>
<dbReference type="GeneTree" id="ENSGT00940000163707"/>
<dbReference type="HOGENOM" id="CLU_2849024_0_0_1"/>
<dbReference type="InParanoid" id="E5RJM6"/>
<dbReference type="OMA" id="TRWGDMA"/>
<dbReference type="OrthoDB" id="20872at2759"/>
<dbReference type="PAN-GO" id="E5RJM6">
    <property type="GO annotations" value="0 GO annotations based on evolutionary models"/>
</dbReference>
<dbReference type="PhylomeDB" id="E5RJM6"/>
<dbReference type="TreeFam" id="TF329520"/>
<dbReference type="PathwayCommons" id="E5RJM6"/>
<dbReference type="BioGRID-ORCS" id="441869">
    <property type="hits" value="31 hits in 1134 CRISPR screens"/>
</dbReference>
<dbReference type="GenomeRNAi" id="441869"/>
<dbReference type="Pharos" id="E5RJM6">
    <property type="development level" value="Tdark"/>
</dbReference>
<dbReference type="PRO" id="PR:E5RJM6"/>
<dbReference type="Proteomes" id="UP000005640">
    <property type="component" value="Chromosome 1"/>
</dbReference>
<dbReference type="RNAct" id="E5RJM6">
    <property type="molecule type" value="protein"/>
</dbReference>
<dbReference type="Bgee" id="ENSG00000235098">
    <property type="expression patterns" value="Expressed in right uterine tube and 109 other cell types or tissues"/>
</dbReference>
<dbReference type="Gene3D" id="1.25.40.20">
    <property type="entry name" value="Ankyrin repeat-containing domain"/>
    <property type="match status" value="4"/>
</dbReference>
<dbReference type="InterPro" id="IPR002110">
    <property type="entry name" value="Ankyrin_rpt"/>
</dbReference>
<dbReference type="InterPro" id="IPR036770">
    <property type="entry name" value="Ankyrin_rpt-contain_sf"/>
</dbReference>
<dbReference type="InterPro" id="IPR050889">
    <property type="entry name" value="Dendritic_Spine_Reg/Scaffold"/>
</dbReference>
<dbReference type="PANTHER" id="PTHR24166:SF48">
    <property type="entry name" value="PROTEIN VAPYRIN"/>
    <property type="match status" value="1"/>
</dbReference>
<dbReference type="PANTHER" id="PTHR24166">
    <property type="entry name" value="ROLLING PEBBLES, ISOFORM B"/>
    <property type="match status" value="1"/>
</dbReference>
<dbReference type="Pfam" id="PF12796">
    <property type="entry name" value="Ank_2"/>
    <property type="match status" value="3"/>
</dbReference>
<dbReference type="PRINTS" id="PR01415">
    <property type="entry name" value="ANKYRIN"/>
</dbReference>
<dbReference type="SMART" id="SM00248">
    <property type="entry name" value="ANK"/>
    <property type="match status" value="9"/>
</dbReference>
<dbReference type="SUPFAM" id="SSF48403">
    <property type="entry name" value="Ankyrin repeat"/>
    <property type="match status" value="1"/>
</dbReference>
<dbReference type="PROSITE" id="PS50297">
    <property type="entry name" value="ANK_REP_REGION"/>
    <property type="match status" value="1"/>
</dbReference>
<dbReference type="PROSITE" id="PS50088">
    <property type="entry name" value="ANK_REPEAT"/>
    <property type="match status" value="7"/>
</dbReference>
<gene>
    <name type="primary">ANKRD65</name>
</gene>
<feature type="chain" id="PRO_0000414484" description="Ankyrin repeat domain-containing protein 65">
    <location>
        <begin position="1"/>
        <end position="399"/>
    </location>
</feature>
<feature type="repeat" description="ANK 1">
    <location>
        <begin position="40"/>
        <end position="69"/>
    </location>
</feature>
<feature type="repeat" description="ANK 2">
    <location>
        <begin position="73"/>
        <end position="102"/>
    </location>
</feature>
<feature type="repeat" description="ANK 3">
    <location>
        <begin position="106"/>
        <end position="135"/>
    </location>
</feature>
<feature type="repeat" description="ANK 4">
    <location>
        <begin position="139"/>
        <end position="168"/>
    </location>
</feature>
<feature type="repeat" description="ANK 5">
    <location>
        <begin position="176"/>
        <end position="205"/>
    </location>
</feature>
<feature type="repeat" description="ANK 6">
    <location>
        <begin position="207"/>
        <end position="231"/>
    </location>
</feature>
<feature type="repeat" description="ANK 7">
    <location>
        <begin position="235"/>
        <end position="264"/>
    </location>
</feature>
<feature type="repeat" description="ANK 8">
    <location>
        <begin position="268"/>
        <end position="297"/>
    </location>
</feature>
<feature type="repeat" description="ANK 9">
    <location>
        <begin position="301"/>
        <end position="330"/>
    </location>
</feature>
<feature type="repeat" description="ANK 10">
    <location>
        <begin position="334"/>
        <end position="363"/>
    </location>
</feature>
<feature type="region of interest" description="Disordered" evidence="1">
    <location>
        <begin position="377"/>
        <end position="399"/>
    </location>
</feature>
<feature type="splice variant" id="VSP_045962" description="In isoform 3." evidence="2">
    <original>A</original>
    <variation>H</variation>
    <location>
        <position position="65"/>
    </location>
</feature>
<feature type="splice variant" id="VSP_045963" description="In isoform 3." evidence="2">
    <location>
        <begin position="66"/>
        <end position="399"/>
    </location>
</feature>
<feature type="splice variant" id="VSP_042085" description="In isoform 2." evidence="2">
    <original>DHAGRTPLHLAVLRGHAPLVRLLLQRGAPVGAVDRAGRTALHEAAWHGHSRVAELLLQRGASAAARSGTGLTPLHWAAALGHTLLAARLLEAPGPGPAAAEAE</original>
    <variation>TLRCCWATGQTQASGTGMAALRCTGLPPEDTCLPSSCWSPRGPRWMRGTPWASHPCITPLGKATWRLPAACWTGVPRWMLPAGSERPPYTWLQSEGMGLPWGFC</variation>
    <location>
        <begin position="71"/>
        <end position="173"/>
    </location>
</feature>
<feature type="splice variant" id="VSP_042086" description="In isoform 2." evidence="2">
    <location>
        <begin position="174"/>
        <end position="399"/>
    </location>
</feature>
<reference key="1">
    <citation type="journal article" date="2006" name="Nature">
        <title>The DNA sequence and biological annotation of human chromosome 1.</title>
        <authorList>
            <person name="Gregory S.G."/>
            <person name="Barlow K.F."/>
            <person name="McLay K.E."/>
            <person name="Kaul R."/>
            <person name="Swarbreck D."/>
            <person name="Dunham A."/>
            <person name="Scott C.E."/>
            <person name="Howe K.L."/>
            <person name="Woodfine K."/>
            <person name="Spencer C.C.A."/>
            <person name="Jones M.C."/>
            <person name="Gillson C."/>
            <person name="Searle S."/>
            <person name="Zhou Y."/>
            <person name="Kokocinski F."/>
            <person name="McDonald L."/>
            <person name="Evans R."/>
            <person name="Phillips K."/>
            <person name="Atkinson A."/>
            <person name="Cooper R."/>
            <person name="Jones C."/>
            <person name="Hall R.E."/>
            <person name="Andrews T.D."/>
            <person name="Lloyd C."/>
            <person name="Ainscough R."/>
            <person name="Almeida J.P."/>
            <person name="Ambrose K.D."/>
            <person name="Anderson F."/>
            <person name="Andrew R.W."/>
            <person name="Ashwell R.I.S."/>
            <person name="Aubin K."/>
            <person name="Babbage A.K."/>
            <person name="Bagguley C.L."/>
            <person name="Bailey J."/>
            <person name="Beasley H."/>
            <person name="Bethel G."/>
            <person name="Bird C.P."/>
            <person name="Bray-Allen S."/>
            <person name="Brown J.Y."/>
            <person name="Brown A.J."/>
            <person name="Buckley D."/>
            <person name="Burton J."/>
            <person name="Bye J."/>
            <person name="Carder C."/>
            <person name="Chapman J.C."/>
            <person name="Clark S.Y."/>
            <person name="Clarke G."/>
            <person name="Clee C."/>
            <person name="Cobley V."/>
            <person name="Collier R.E."/>
            <person name="Corby N."/>
            <person name="Coville G.J."/>
            <person name="Davies J."/>
            <person name="Deadman R."/>
            <person name="Dunn M."/>
            <person name="Earthrowl M."/>
            <person name="Ellington A.G."/>
            <person name="Errington H."/>
            <person name="Frankish A."/>
            <person name="Frankland J."/>
            <person name="French L."/>
            <person name="Garner P."/>
            <person name="Garnett J."/>
            <person name="Gay L."/>
            <person name="Ghori M.R.J."/>
            <person name="Gibson R."/>
            <person name="Gilby L.M."/>
            <person name="Gillett W."/>
            <person name="Glithero R.J."/>
            <person name="Grafham D.V."/>
            <person name="Griffiths C."/>
            <person name="Griffiths-Jones S."/>
            <person name="Grocock R."/>
            <person name="Hammond S."/>
            <person name="Harrison E.S.I."/>
            <person name="Hart E."/>
            <person name="Haugen E."/>
            <person name="Heath P.D."/>
            <person name="Holmes S."/>
            <person name="Holt K."/>
            <person name="Howden P.J."/>
            <person name="Hunt A.R."/>
            <person name="Hunt S.E."/>
            <person name="Hunter G."/>
            <person name="Isherwood J."/>
            <person name="James R."/>
            <person name="Johnson C."/>
            <person name="Johnson D."/>
            <person name="Joy A."/>
            <person name="Kay M."/>
            <person name="Kershaw J.K."/>
            <person name="Kibukawa M."/>
            <person name="Kimberley A.M."/>
            <person name="King A."/>
            <person name="Knights A.J."/>
            <person name="Lad H."/>
            <person name="Laird G."/>
            <person name="Lawlor S."/>
            <person name="Leongamornlert D.A."/>
            <person name="Lloyd D.M."/>
            <person name="Loveland J."/>
            <person name="Lovell J."/>
            <person name="Lush M.J."/>
            <person name="Lyne R."/>
            <person name="Martin S."/>
            <person name="Mashreghi-Mohammadi M."/>
            <person name="Matthews L."/>
            <person name="Matthews N.S.W."/>
            <person name="McLaren S."/>
            <person name="Milne S."/>
            <person name="Mistry S."/>
            <person name="Moore M.J.F."/>
            <person name="Nickerson T."/>
            <person name="O'Dell C.N."/>
            <person name="Oliver K."/>
            <person name="Palmeiri A."/>
            <person name="Palmer S.A."/>
            <person name="Parker A."/>
            <person name="Patel D."/>
            <person name="Pearce A.V."/>
            <person name="Peck A.I."/>
            <person name="Pelan S."/>
            <person name="Phelps K."/>
            <person name="Phillimore B.J."/>
            <person name="Plumb R."/>
            <person name="Rajan J."/>
            <person name="Raymond C."/>
            <person name="Rouse G."/>
            <person name="Saenphimmachak C."/>
            <person name="Sehra H.K."/>
            <person name="Sheridan E."/>
            <person name="Shownkeen R."/>
            <person name="Sims S."/>
            <person name="Skuce C.D."/>
            <person name="Smith M."/>
            <person name="Steward C."/>
            <person name="Subramanian S."/>
            <person name="Sycamore N."/>
            <person name="Tracey A."/>
            <person name="Tromans A."/>
            <person name="Van Helmond Z."/>
            <person name="Wall M."/>
            <person name="Wallis J.M."/>
            <person name="White S."/>
            <person name="Whitehead S.L."/>
            <person name="Wilkinson J.E."/>
            <person name="Willey D.L."/>
            <person name="Williams H."/>
            <person name="Wilming L."/>
            <person name="Wray P.W."/>
            <person name="Wu Z."/>
            <person name="Coulson A."/>
            <person name="Vaudin M."/>
            <person name="Sulston J.E."/>
            <person name="Durbin R.M."/>
            <person name="Hubbard T."/>
            <person name="Wooster R."/>
            <person name="Dunham I."/>
            <person name="Carter N.P."/>
            <person name="McVean G."/>
            <person name="Ross M.T."/>
            <person name="Harrow J."/>
            <person name="Olson M.V."/>
            <person name="Beck S."/>
            <person name="Rogers J."/>
            <person name="Bentley D.R."/>
        </authorList>
    </citation>
    <scope>NUCLEOTIDE SEQUENCE [LARGE SCALE GENOMIC DNA]</scope>
</reference>
<reference key="2">
    <citation type="journal article" date="2004" name="Genome Res.">
        <title>The status, quality, and expansion of the NIH full-length cDNA project: the Mammalian Gene Collection (MGC).</title>
        <authorList>
            <consortium name="The MGC Project Team"/>
        </authorList>
    </citation>
    <scope>NUCLEOTIDE SEQUENCE [LARGE SCALE MRNA] (ISOFORMS 2 AND 3)</scope>
    <scope>NUCLEOTIDE SEQUENCE [LARGE SCALE MRNA] OF 39-186 (ISOFORM 1)</scope>
    <source>
        <tissue>Astrocytoma</tissue>
        <tissue>Kidney</tissue>
        <tissue>Retinoblastoma</tissue>
    </source>
</reference>
<keyword id="KW-0025">Alternative splicing</keyword>
<keyword id="KW-0040">ANK repeat</keyword>
<keyword id="KW-1267">Proteomics identification</keyword>
<keyword id="KW-1185">Reference proteome</keyword>
<keyword id="KW-0677">Repeat</keyword>
<comment type="alternative products">
    <event type="alternative splicing"/>
    <isoform>
        <id>E5RJM6-1</id>
        <name>1</name>
        <sequence type="displayed"/>
    </isoform>
    <isoform>
        <id>E5RJM6-2</id>
        <name>2</name>
        <sequence type="described" ref="VSP_042085 VSP_042086"/>
    </isoform>
    <isoform>
        <id>E5RJM6-3</id>
        <name>3</name>
        <sequence type="described" ref="VSP_045962 VSP_045963"/>
    </isoform>
</comment>
<evidence type="ECO:0000256" key="1">
    <source>
        <dbReference type="SAM" id="MobiDB-lite"/>
    </source>
</evidence>
<evidence type="ECO:0000303" key="2">
    <source>
    </source>
</evidence>
<proteinExistence type="evidence at protein level"/>
<name>ANR65_HUMAN</name>
<accession>E5RJM6</accession>
<accession>J3KR93</accession>
<protein>
    <recommendedName>
        <fullName>Ankyrin repeat domain-containing protein 65</fullName>
    </recommendedName>
</protein>
<organism>
    <name type="scientific">Homo sapiens</name>
    <name type="common">Human</name>
    <dbReference type="NCBI Taxonomy" id="9606"/>
    <lineage>
        <taxon>Eukaryota</taxon>
        <taxon>Metazoa</taxon>
        <taxon>Chordata</taxon>
        <taxon>Craniata</taxon>
        <taxon>Vertebrata</taxon>
        <taxon>Euteleostomi</taxon>
        <taxon>Mammalia</taxon>
        <taxon>Eutheria</taxon>
        <taxon>Euarchontoglires</taxon>
        <taxon>Primates</taxon>
        <taxon>Haplorrhini</taxon>
        <taxon>Catarrhini</taxon>
        <taxon>Hominidae</taxon>
        <taxon>Homo</taxon>
    </lineage>
</organism>
<sequence length="399" mass="41497">MDSQRPEPREEEEEEQELRWMELDSEEALGTRTEGPSVVQGWGHLLQAVWRGPAGLVTQLLRQGASVEERDHAGRTPLHLAVLRGHAPLVRLLLQRGAPVGAVDRAGRTALHEAAWHGHSRVAELLLQRGASAAARSGTGLTPLHWAAALGHTLLAARLLEAPGPGPAAAEAEDARGWTAAHWAAAGGRLAVLELLAAGGAGLDGALLVAAAAGRGAALRFLLARGARVDARDGAGATALGLAAALGRSQDIEVLLGHGADPGIRDRHGRSALHRAAARGHLLAVQLLVTQGAEVDARDTLGLTPLHHASREGHVEVAGCLLDRGAQVDATGWLRKTPLHLAAERGHGPTVGLLLSRGASPTLRTQWAEVAQMPEGDLPQALPELGGGEKECEGIESTG</sequence>